<organism>
    <name type="scientific">Oryza sativa subsp. japonica</name>
    <name type="common">Rice</name>
    <dbReference type="NCBI Taxonomy" id="39947"/>
    <lineage>
        <taxon>Eukaryota</taxon>
        <taxon>Viridiplantae</taxon>
        <taxon>Streptophyta</taxon>
        <taxon>Embryophyta</taxon>
        <taxon>Tracheophyta</taxon>
        <taxon>Spermatophyta</taxon>
        <taxon>Magnoliopsida</taxon>
        <taxon>Liliopsida</taxon>
        <taxon>Poales</taxon>
        <taxon>Poaceae</taxon>
        <taxon>BOP clade</taxon>
        <taxon>Oryzoideae</taxon>
        <taxon>Oryzeae</taxon>
        <taxon>Oryzinae</taxon>
        <taxon>Oryza</taxon>
        <taxon>Oryza sativa</taxon>
    </lineage>
</organism>
<protein>
    <recommendedName>
        <fullName evidence="6">Zinc finger protein CO3</fullName>
    </recommendedName>
    <alternativeName>
        <fullName>Protein CONSTANS-like CO3</fullName>
        <shortName evidence="5">OsCO3</shortName>
    </alternativeName>
</protein>
<proteinExistence type="evidence at transcript level"/>
<name>CO3_ORYSJ</name>
<evidence type="ECO:0000255" key="1">
    <source>
        <dbReference type="PROSITE-ProRule" id="PRU00024"/>
    </source>
</evidence>
<evidence type="ECO:0000255" key="2">
    <source>
        <dbReference type="PROSITE-ProRule" id="PRU00357"/>
    </source>
</evidence>
<evidence type="ECO:0000256" key="3">
    <source>
        <dbReference type="SAM" id="MobiDB-lite"/>
    </source>
</evidence>
<evidence type="ECO:0000269" key="4">
    <source>
    </source>
</evidence>
<evidence type="ECO:0000303" key="5">
    <source>
    </source>
</evidence>
<evidence type="ECO:0000305" key="6"/>
<evidence type="ECO:0000312" key="7">
    <source>
        <dbReference type="EMBL" id="BAD36814.1"/>
    </source>
</evidence>
<evidence type="ECO:0000312" key="8">
    <source>
        <dbReference type="EMBL" id="BAF24557.1"/>
    </source>
</evidence>
<reference key="1">
    <citation type="journal article" date="1998" name="DNA Res.">
        <title>Isolation and mapping of a family of putative zinc-finger protein cDNAs from rice.</title>
        <authorList>
            <person name="Song J."/>
            <person name="Yamamoto K."/>
            <person name="Shomura A."/>
            <person name="Itadani H."/>
            <person name="Zhong H.S."/>
            <person name="Yano M."/>
            <person name="Sasaki T."/>
        </authorList>
    </citation>
    <scope>NUCLEOTIDE SEQUENCE [MRNA]</scope>
    <source>
        <tissue>Shoot</tissue>
    </source>
</reference>
<reference key="2">
    <citation type="journal article" date="2005" name="Nature">
        <title>The map-based sequence of the rice genome.</title>
        <authorList>
            <consortium name="International rice genome sequencing project (IRGSP)"/>
        </authorList>
    </citation>
    <scope>NUCLEOTIDE SEQUENCE [LARGE SCALE GENOMIC DNA]</scope>
    <source>
        <strain>cv. Nipponbare</strain>
    </source>
</reference>
<reference key="3">
    <citation type="journal article" date="2008" name="Nucleic Acids Res.">
        <title>The rice annotation project database (RAP-DB): 2008 update.</title>
        <authorList>
            <consortium name="The rice annotation project (RAP)"/>
        </authorList>
    </citation>
    <scope>GENOME REANNOTATION</scope>
    <source>
        <strain>cv. Nipponbare</strain>
    </source>
</reference>
<reference key="4">
    <citation type="journal article" date="2013" name="Rice">
        <title>Improvement of the Oryza sativa Nipponbare reference genome using next generation sequence and optical map data.</title>
        <authorList>
            <person name="Kawahara Y."/>
            <person name="de la Bastide M."/>
            <person name="Hamilton J.P."/>
            <person name="Kanamori H."/>
            <person name="McCombie W.R."/>
            <person name="Ouyang S."/>
            <person name="Schwartz D.C."/>
            <person name="Tanaka T."/>
            <person name="Wu J."/>
            <person name="Zhou S."/>
            <person name="Childs K.L."/>
            <person name="Davidson R.M."/>
            <person name="Lin H."/>
            <person name="Quesada-Ocampo L."/>
            <person name="Vaillancourt B."/>
            <person name="Sakai H."/>
            <person name="Lee S.S."/>
            <person name="Kim J."/>
            <person name="Numa H."/>
            <person name="Itoh T."/>
            <person name="Buell C.R."/>
            <person name="Matsumoto T."/>
        </authorList>
    </citation>
    <scope>GENOME REANNOTATION</scope>
    <source>
        <strain>cv. Nipponbare</strain>
    </source>
</reference>
<reference key="5">
    <citation type="journal article" date="2008" name="Planta">
        <title>OsCO3, a CONSTANS-LIKE gene, controls flowering by negatively regulating the expression of FT-like genes under SD conditions in rice.</title>
        <authorList>
            <person name="Kim S.K."/>
            <person name="Yun C.H."/>
            <person name="Lee J.H."/>
            <person name="Jang Y.H."/>
            <person name="Park H.Y."/>
            <person name="Kim J.K."/>
        </authorList>
    </citation>
    <scope>FUNCTION</scope>
    <scope>INDUCTION</scope>
</reference>
<accession>O82117</accession>
<accession>Q68UR6</accession>
<sequence>MLKLEPEFPGLPQRCDSCRSAPCAFYCLADSAALCATCDADVHSVNPLARRHRRVPMGVVAAPGAGGAFVVRPAGGVNSSWPIREGRRCDYDDDDADAAGEEDEEATSWLLFDPLKDSSDQGLPPFGDALVADFLNLGGGAGEKEDASSSKDCSSSHGKSSEGSHEFAVPGEPVPERQGFGAVSMDITDYDASNFRRGYSFGASLGHSVSMSSLENMSTVPDCGVPDITTSYLRSSKSTIDLFTAAAGSPVAAHSIMSPPQFMGAIDREARVHRYREKRKTRRFEKTIRYASRKAYAETRPRIKGRFAKRSDTDLEVDQYFSTTADSSCGVVPTF</sequence>
<comment type="function">
    <text evidence="4">Probable transcription factor involved in the regulation of flowering time under short day (SD) conditions. Functions as a repressor of flowering under SD conditions, independently of HD1, EHD1, MADS50 and MADS51. Controls flowering time under SD conditions by negatively regulating the expression of HD3A and FTL.</text>
</comment>
<comment type="subcellular location">
    <subcellularLocation>
        <location evidence="2">Nucleus</location>
    </subcellularLocation>
</comment>
<comment type="induction">
    <text evidence="4">Circadian-regulation under long day (LD) conditions. Expression increases after the beginning of the dark period, peaks at dawn, stays high four hours and gradually decreases until sunset.</text>
</comment>
<comment type="miscellaneous">
    <text evidence="4">Plants over-expressing CO3 display late flowering under short day (SD) conditions.</text>
</comment>
<comment type="similarity">
    <text evidence="6">Belongs to the CONSTANS family.</text>
</comment>
<comment type="sequence caution" evidence="6">
    <conflict type="erroneous gene model prediction">
        <sequence resource="EMBL-CDS" id="BAD36814"/>
    </conflict>
</comment>
<keyword id="KW-0238">DNA-binding</keyword>
<keyword id="KW-0287">Flowering</keyword>
<keyword id="KW-0479">Metal-binding</keyword>
<keyword id="KW-0539">Nucleus</keyword>
<keyword id="KW-1185">Reference proteome</keyword>
<keyword id="KW-0804">Transcription</keyword>
<keyword id="KW-0805">Transcription regulation</keyword>
<keyword id="KW-0862">Zinc</keyword>
<keyword id="KW-0863">Zinc-finger</keyword>
<feature type="chain" id="PRO_0000437427" description="Zinc finger protein CO3">
    <location>
        <begin position="1"/>
        <end position="335"/>
    </location>
</feature>
<feature type="domain" description="CCT" evidence="2">
    <location>
        <begin position="268"/>
        <end position="310"/>
    </location>
</feature>
<feature type="zinc finger region" description="B box-type; atypical" evidence="1">
    <location>
        <begin position="15"/>
        <end position="57"/>
    </location>
</feature>
<feature type="region of interest" description="Disordered" evidence="3">
    <location>
        <begin position="141"/>
        <end position="179"/>
    </location>
</feature>
<feature type="binding site" evidence="1">
    <location>
        <position position="15"/>
    </location>
    <ligand>
        <name>Zn(2+)</name>
        <dbReference type="ChEBI" id="CHEBI:29105"/>
    </ligand>
</feature>
<feature type="binding site" evidence="1">
    <location>
        <position position="18"/>
    </location>
    <ligand>
        <name>Zn(2+)</name>
        <dbReference type="ChEBI" id="CHEBI:29105"/>
    </ligand>
</feature>
<feature type="binding site" evidence="1">
    <location>
        <position position="38"/>
    </location>
    <ligand>
        <name>Zn(2+)</name>
        <dbReference type="ChEBI" id="CHEBI:29105"/>
    </ligand>
</feature>
<feature type="binding site" evidence="1">
    <location>
        <position position="43"/>
    </location>
    <ligand>
        <name>Zn(2+)</name>
        <dbReference type="ChEBI" id="CHEBI:29105"/>
    </ligand>
</feature>
<gene>
    <name evidence="5" type="primary">CO3</name>
    <name evidence="8" type="ordered locus">Os09g0240200</name>
    <name evidence="6" type="ordered locus">LOC_Os09g06464</name>
    <name evidence="7" type="ORF">OJ1178_D01.3</name>
</gene>
<dbReference type="EMBL" id="AB001887">
    <property type="protein sequence ID" value="BAA33205.1"/>
    <property type="molecule type" value="mRNA"/>
</dbReference>
<dbReference type="EMBL" id="AP005560">
    <property type="protein sequence ID" value="BAD36814.1"/>
    <property type="status" value="ALT_SEQ"/>
    <property type="molecule type" value="Genomic_DNA"/>
</dbReference>
<dbReference type="EMBL" id="AP008215">
    <property type="protein sequence ID" value="BAF24557.1"/>
    <property type="molecule type" value="Genomic_DNA"/>
</dbReference>
<dbReference type="EMBL" id="AP014965">
    <property type="protein sequence ID" value="BAT06983.1"/>
    <property type="molecule type" value="Genomic_DNA"/>
</dbReference>
<dbReference type="PIR" id="JE0115">
    <property type="entry name" value="JE0115"/>
</dbReference>
<dbReference type="SMR" id="O82117"/>
<dbReference type="STRING" id="39947.O82117"/>
<dbReference type="PaxDb" id="39947-O82117"/>
<dbReference type="EnsemblPlants" id="Os09t0240200-01">
    <property type="protein sequence ID" value="Os09t0240200-01"/>
    <property type="gene ID" value="Os09g0240200"/>
</dbReference>
<dbReference type="GeneID" id="4346474"/>
<dbReference type="Gramene" id="Os09t0240200-01">
    <property type="protein sequence ID" value="Os09t0240200-01"/>
    <property type="gene ID" value="Os09g0240200"/>
</dbReference>
<dbReference type="KEGG" id="dosa:Os09g0240200"/>
<dbReference type="KEGG" id="osa:4346474"/>
<dbReference type="eggNOG" id="KOG1601">
    <property type="taxonomic scope" value="Eukaryota"/>
</dbReference>
<dbReference type="HOGENOM" id="CLU_028225_3_2_1"/>
<dbReference type="InParanoid" id="O82117"/>
<dbReference type="OMA" id="ENQGSEC"/>
<dbReference type="OrthoDB" id="153872at2759"/>
<dbReference type="Proteomes" id="UP000000763">
    <property type="component" value="Chromosome 9"/>
</dbReference>
<dbReference type="Proteomes" id="UP000059680">
    <property type="component" value="Chromosome 9"/>
</dbReference>
<dbReference type="GO" id="GO:0005634">
    <property type="term" value="C:nucleus"/>
    <property type="evidence" value="ECO:0000318"/>
    <property type="project" value="GO_Central"/>
</dbReference>
<dbReference type="GO" id="GO:0003677">
    <property type="term" value="F:DNA binding"/>
    <property type="evidence" value="ECO:0007669"/>
    <property type="project" value="UniProtKB-KW"/>
</dbReference>
<dbReference type="GO" id="GO:0008270">
    <property type="term" value="F:zinc ion binding"/>
    <property type="evidence" value="ECO:0007669"/>
    <property type="project" value="UniProtKB-KW"/>
</dbReference>
<dbReference type="GO" id="GO:0009908">
    <property type="term" value="P:flower development"/>
    <property type="evidence" value="ECO:0007669"/>
    <property type="project" value="UniProtKB-KW"/>
</dbReference>
<dbReference type="GO" id="GO:0048577">
    <property type="term" value="P:negative regulation of short-day photoperiodism, flowering"/>
    <property type="evidence" value="ECO:0000315"/>
    <property type="project" value="UniProtKB"/>
</dbReference>
<dbReference type="GO" id="GO:0009909">
    <property type="term" value="P:regulation of flower development"/>
    <property type="evidence" value="ECO:0000318"/>
    <property type="project" value="GO_Central"/>
</dbReference>
<dbReference type="GO" id="GO:2000028">
    <property type="term" value="P:regulation of photoperiodism, flowering"/>
    <property type="evidence" value="ECO:0000318"/>
    <property type="project" value="GO_Central"/>
</dbReference>
<dbReference type="CDD" id="cd19821">
    <property type="entry name" value="Bbox1_BBX-like"/>
    <property type="match status" value="1"/>
</dbReference>
<dbReference type="InterPro" id="IPR010402">
    <property type="entry name" value="CCT_domain"/>
</dbReference>
<dbReference type="InterPro" id="IPR045281">
    <property type="entry name" value="CONSTANS-like"/>
</dbReference>
<dbReference type="InterPro" id="IPR049808">
    <property type="entry name" value="CONSTANS-like_Bbox1"/>
</dbReference>
<dbReference type="InterPro" id="IPR000315">
    <property type="entry name" value="Znf_B-box"/>
</dbReference>
<dbReference type="PANTHER" id="PTHR31319:SF117">
    <property type="entry name" value="ZINC FINGER PROTEIN CO3"/>
    <property type="match status" value="1"/>
</dbReference>
<dbReference type="PANTHER" id="PTHR31319">
    <property type="entry name" value="ZINC FINGER PROTEIN CONSTANS-LIKE 4"/>
    <property type="match status" value="1"/>
</dbReference>
<dbReference type="Pfam" id="PF06203">
    <property type="entry name" value="CCT"/>
    <property type="match status" value="1"/>
</dbReference>
<dbReference type="Pfam" id="PF00643">
    <property type="entry name" value="zf-B_box"/>
    <property type="match status" value="1"/>
</dbReference>
<dbReference type="SMART" id="SM00336">
    <property type="entry name" value="BBOX"/>
    <property type="match status" value="1"/>
</dbReference>
<dbReference type="PROSITE" id="PS51017">
    <property type="entry name" value="CCT"/>
    <property type="match status" value="1"/>
</dbReference>
<dbReference type="PROSITE" id="PS50119">
    <property type="entry name" value="ZF_BBOX"/>
    <property type="match status" value="1"/>
</dbReference>